<evidence type="ECO:0000255" key="1">
    <source>
        <dbReference type="HAMAP-Rule" id="MF_00046"/>
    </source>
</evidence>
<protein>
    <recommendedName>
        <fullName evidence="1">UDP-N-acetylmuramate--L-alanine ligase</fullName>
        <ecNumber evidence="1">6.3.2.8</ecNumber>
    </recommendedName>
    <alternativeName>
        <fullName evidence="1">UDP-N-acetylmuramoyl-L-alanine synthetase</fullName>
    </alternativeName>
</protein>
<name>MURC_HAMD5</name>
<comment type="function">
    <text evidence="1">Cell wall formation.</text>
</comment>
<comment type="catalytic activity">
    <reaction evidence="1">
        <text>UDP-N-acetyl-alpha-D-muramate + L-alanine + ATP = UDP-N-acetyl-alpha-D-muramoyl-L-alanine + ADP + phosphate + H(+)</text>
        <dbReference type="Rhea" id="RHEA:23372"/>
        <dbReference type="ChEBI" id="CHEBI:15378"/>
        <dbReference type="ChEBI" id="CHEBI:30616"/>
        <dbReference type="ChEBI" id="CHEBI:43474"/>
        <dbReference type="ChEBI" id="CHEBI:57972"/>
        <dbReference type="ChEBI" id="CHEBI:70757"/>
        <dbReference type="ChEBI" id="CHEBI:83898"/>
        <dbReference type="ChEBI" id="CHEBI:456216"/>
        <dbReference type="EC" id="6.3.2.8"/>
    </reaction>
</comment>
<comment type="pathway">
    <text evidence="1">Cell wall biogenesis; peptidoglycan biosynthesis.</text>
</comment>
<comment type="subcellular location">
    <subcellularLocation>
        <location evidence="1">Cytoplasm</location>
    </subcellularLocation>
</comment>
<comment type="similarity">
    <text evidence="1">Belongs to the MurCDEF family.</text>
</comment>
<organism>
    <name type="scientific">Hamiltonella defensa subsp. Acyrthosiphon pisum (strain 5AT)</name>
    <dbReference type="NCBI Taxonomy" id="572265"/>
    <lineage>
        <taxon>Bacteria</taxon>
        <taxon>Pseudomonadati</taxon>
        <taxon>Pseudomonadota</taxon>
        <taxon>Gammaproteobacteria</taxon>
        <taxon>Enterobacterales</taxon>
        <taxon>Enterobacteriaceae</taxon>
        <taxon>aphid secondary symbionts</taxon>
        <taxon>Candidatus Hamiltonella</taxon>
    </lineage>
</organism>
<gene>
    <name evidence="1" type="primary">murC</name>
    <name type="ordered locus">HDEF_1782</name>
</gene>
<keyword id="KW-0067">ATP-binding</keyword>
<keyword id="KW-0131">Cell cycle</keyword>
<keyword id="KW-0132">Cell division</keyword>
<keyword id="KW-0133">Cell shape</keyword>
<keyword id="KW-0961">Cell wall biogenesis/degradation</keyword>
<keyword id="KW-0963">Cytoplasm</keyword>
<keyword id="KW-0436">Ligase</keyword>
<keyword id="KW-0547">Nucleotide-binding</keyword>
<keyword id="KW-0573">Peptidoglycan synthesis</keyword>
<sequence length="493" mass="54644">MNQKQLTKLRTMVPEMKRVRHIHFIGIGGAGMGGIAEVLANEGYKITGSDLAENVVTQQLSHLGICIFFHHHRDNVKNASVVVVSSAIPEDNPEILAAHEARIPVIQRAEMLAELMRFRHGIAIAGTHGKTTTTAMVASIYAQAGLDPTFVNGGLIKAAGKHAQLGSSRYLIVEADESDASFIHLQPLVAIVTNIEADHMDTYQGNFEHLKQTFINFLHNLPFYGRAILCIDDQVIRTLLPRIARHITTYGFSEDADIKITGYEQKEFTSYFMLERVHKPILKIQLNAPGRHNALNAAAAVAVATEEGVEDEHILQALSFFQGTGRRFDCLGIFPLQPVNGQQGEVMLIDDYGHHPTEVAATIKAARVGWPTKRLVMIFQPHRYSRTRDLYDDFVNVLSQVDILLMLEIYSAGESPIPDISSCALCDSIRDFSHRMPILVTDHEKLPSLLAKQLKENDMVLVQGAGNIGKVARTLAECELKVPPLIQKESHYA</sequence>
<feature type="chain" id="PRO_1000202183" description="UDP-N-acetylmuramate--L-alanine ligase">
    <location>
        <begin position="1"/>
        <end position="493"/>
    </location>
</feature>
<feature type="binding site" evidence="1">
    <location>
        <begin position="126"/>
        <end position="132"/>
    </location>
    <ligand>
        <name>ATP</name>
        <dbReference type="ChEBI" id="CHEBI:30616"/>
    </ligand>
</feature>
<reference key="1">
    <citation type="journal article" date="2009" name="Proc. Natl. Acad. Sci. U.S.A.">
        <title>Hamiltonella defensa, genome evolution of protective bacterial endosymbiont from pathogenic ancestors.</title>
        <authorList>
            <person name="Degnan P.H."/>
            <person name="Yu Y."/>
            <person name="Sisneros N."/>
            <person name="Wing R.A."/>
            <person name="Moran N.A."/>
        </authorList>
    </citation>
    <scope>NUCLEOTIDE SEQUENCE [LARGE SCALE GENOMIC DNA]</scope>
    <source>
        <strain>5AT</strain>
    </source>
</reference>
<dbReference type="EC" id="6.3.2.8" evidence="1"/>
<dbReference type="EMBL" id="CP001277">
    <property type="protein sequence ID" value="ACQ68378.1"/>
    <property type="molecule type" value="Genomic_DNA"/>
</dbReference>
<dbReference type="RefSeq" id="WP_015874142.1">
    <property type="nucleotide sequence ID" value="NC_012751.1"/>
</dbReference>
<dbReference type="SMR" id="C4K735"/>
<dbReference type="STRING" id="572265.HDEF_1782"/>
<dbReference type="GeneID" id="66261373"/>
<dbReference type="KEGG" id="hde:HDEF_1782"/>
<dbReference type="eggNOG" id="COG0773">
    <property type="taxonomic scope" value="Bacteria"/>
</dbReference>
<dbReference type="HOGENOM" id="CLU_028104_2_2_6"/>
<dbReference type="UniPathway" id="UPA00219"/>
<dbReference type="Proteomes" id="UP000002334">
    <property type="component" value="Chromosome"/>
</dbReference>
<dbReference type="GO" id="GO:0005737">
    <property type="term" value="C:cytoplasm"/>
    <property type="evidence" value="ECO:0007669"/>
    <property type="project" value="UniProtKB-SubCell"/>
</dbReference>
<dbReference type="GO" id="GO:0005524">
    <property type="term" value="F:ATP binding"/>
    <property type="evidence" value="ECO:0007669"/>
    <property type="project" value="UniProtKB-UniRule"/>
</dbReference>
<dbReference type="GO" id="GO:0008763">
    <property type="term" value="F:UDP-N-acetylmuramate-L-alanine ligase activity"/>
    <property type="evidence" value="ECO:0007669"/>
    <property type="project" value="UniProtKB-UniRule"/>
</dbReference>
<dbReference type="GO" id="GO:0051301">
    <property type="term" value="P:cell division"/>
    <property type="evidence" value="ECO:0007669"/>
    <property type="project" value="UniProtKB-KW"/>
</dbReference>
<dbReference type="GO" id="GO:0071555">
    <property type="term" value="P:cell wall organization"/>
    <property type="evidence" value="ECO:0007669"/>
    <property type="project" value="UniProtKB-KW"/>
</dbReference>
<dbReference type="GO" id="GO:0009252">
    <property type="term" value="P:peptidoglycan biosynthetic process"/>
    <property type="evidence" value="ECO:0007669"/>
    <property type="project" value="UniProtKB-UniRule"/>
</dbReference>
<dbReference type="GO" id="GO:0008360">
    <property type="term" value="P:regulation of cell shape"/>
    <property type="evidence" value="ECO:0007669"/>
    <property type="project" value="UniProtKB-KW"/>
</dbReference>
<dbReference type="CDD" id="cd01983">
    <property type="entry name" value="SIMIBI"/>
    <property type="match status" value="1"/>
</dbReference>
<dbReference type="FunFam" id="3.40.1190.10:FF:000001">
    <property type="entry name" value="UDP-N-acetylmuramate--L-alanine ligase"/>
    <property type="match status" value="1"/>
</dbReference>
<dbReference type="FunFam" id="3.40.50.720:FF:000046">
    <property type="entry name" value="UDP-N-acetylmuramate--L-alanine ligase"/>
    <property type="match status" value="1"/>
</dbReference>
<dbReference type="Gene3D" id="3.90.190.20">
    <property type="entry name" value="Mur ligase, C-terminal domain"/>
    <property type="match status" value="1"/>
</dbReference>
<dbReference type="Gene3D" id="3.40.1190.10">
    <property type="entry name" value="Mur-like, catalytic domain"/>
    <property type="match status" value="1"/>
</dbReference>
<dbReference type="Gene3D" id="3.40.50.720">
    <property type="entry name" value="NAD(P)-binding Rossmann-like Domain"/>
    <property type="match status" value="1"/>
</dbReference>
<dbReference type="HAMAP" id="MF_00046">
    <property type="entry name" value="MurC"/>
    <property type="match status" value="1"/>
</dbReference>
<dbReference type="InterPro" id="IPR036565">
    <property type="entry name" value="Mur-like_cat_sf"/>
</dbReference>
<dbReference type="InterPro" id="IPR004101">
    <property type="entry name" value="Mur_ligase_C"/>
</dbReference>
<dbReference type="InterPro" id="IPR036615">
    <property type="entry name" value="Mur_ligase_C_dom_sf"/>
</dbReference>
<dbReference type="InterPro" id="IPR013221">
    <property type="entry name" value="Mur_ligase_cen"/>
</dbReference>
<dbReference type="InterPro" id="IPR000713">
    <property type="entry name" value="Mur_ligase_N"/>
</dbReference>
<dbReference type="InterPro" id="IPR050061">
    <property type="entry name" value="MurCDEF_pg_biosynth"/>
</dbReference>
<dbReference type="InterPro" id="IPR005758">
    <property type="entry name" value="UDP-N-AcMur_Ala_ligase_MurC"/>
</dbReference>
<dbReference type="NCBIfam" id="TIGR01082">
    <property type="entry name" value="murC"/>
    <property type="match status" value="1"/>
</dbReference>
<dbReference type="PANTHER" id="PTHR43445:SF3">
    <property type="entry name" value="UDP-N-ACETYLMURAMATE--L-ALANINE LIGASE"/>
    <property type="match status" value="1"/>
</dbReference>
<dbReference type="PANTHER" id="PTHR43445">
    <property type="entry name" value="UDP-N-ACETYLMURAMATE--L-ALANINE LIGASE-RELATED"/>
    <property type="match status" value="1"/>
</dbReference>
<dbReference type="Pfam" id="PF01225">
    <property type="entry name" value="Mur_ligase"/>
    <property type="match status" value="1"/>
</dbReference>
<dbReference type="Pfam" id="PF02875">
    <property type="entry name" value="Mur_ligase_C"/>
    <property type="match status" value="1"/>
</dbReference>
<dbReference type="Pfam" id="PF08245">
    <property type="entry name" value="Mur_ligase_M"/>
    <property type="match status" value="1"/>
</dbReference>
<dbReference type="SUPFAM" id="SSF51984">
    <property type="entry name" value="MurCD N-terminal domain"/>
    <property type="match status" value="1"/>
</dbReference>
<dbReference type="SUPFAM" id="SSF53623">
    <property type="entry name" value="MurD-like peptide ligases, catalytic domain"/>
    <property type="match status" value="1"/>
</dbReference>
<dbReference type="SUPFAM" id="SSF53244">
    <property type="entry name" value="MurD-like peptide ligases, peptide-binding domain"/>
    <property type="match status" value="1"/>
</dbReference>
<accession>C4K735</accession>
<proteinExistence type="inferred from homology"/>